<keyword id="KW-0963">Cytoplasm</keyword>
<keyword id="KW-0342">GTP-binding</keyword>
<keyword id="KW-0547">Nucleotide-binding</keyword>
<keyword id="KW-0648">Protein biosynthesis</keyword>
<keyword id="KW-1185">Reference proteome</keyword>
<name>RF3_STAS1</name>
<reference key="1">
    <citation type="journal article" date="2005" name="Proc. Natl. Acad. Sci. U.S.A.">
        <title>Whole genome sequence of Staphylococcus saprophyticus reveals the pathogenesis of uncomplicated urinary tract infection.</title>
        <authorList>
            <person name="Kuroda M."/>
            <person name="Yamashita A."/>
            <person name="Hirakawa H."/>
            <person name="Kumano M."/>
            <person name="Morikawa K."/>
            <person name="Higashide M."/>
            <person name="Maruyama A."/>
            <person name="Inose Y."/>
            <person name="Matoba K."/>
            <person name="Toh H."/>
            <person name="Kuhara S."/>
            <person name="Hattori M."/>
            <person name="Ohta T."/>
        </authorList>
    </citation>
    <scope>NUCLEOTIDE SEQUENCE [LARGE SCALE GENOMIC DNA]</scope>
    <source>
        <strain>ATCC 15305 / DSM 20229 / NCIMB 8711 / NCTC 7292 / S-41</strain>
    </source>
</reference>
<feature type="chain" id="PRO_0000242214" description="Peptide chain release factor 3">
    <location>
        <begin position="1"/>
        <end position="520"/>
    </location>
</feature>
<feature type="domain" description="tr-type G">
    <location>
        <begin position="8"/>
        <end position="277"/>
    </location>
</feature>
<feature type="binding site" evidence="1">
    <location>
        <begin position="17"/>
        <end position="24"/>
    </location>
    <ligand>
        <name>GTP</name>
        <dbReference type="ChEBI" id="CHEBI:37565"/>
    </ligand>
</feature>
<feature type="binding site" evidence="1">
    <location>
        <begin position="85"/>
        <end position="89"/>
    </location>
    <ligand>
        <name>GTP</name>
        <dbReference type="ChEBI" id="CHEBI:37565"/>
    </ligand>
</feature>
<feature type="binding site" evidence="1">
    <location>
        <begin position="139"/>
        <end position="142"/>
    </location>
    <ligand>
        <name>GTP</name>
        <dbReference type="ChEBI" id="CHEBI:37565"/>
    </ligand>
</feature>
<gene>
    <name evidence="1" type="primary">prfC</name>
    <name type="ordered locus">SSP1765</name>
</gene>
<protein>
    <recommendedName>
        <fullName evidence="1">Peptide chain release factor 3</fullName>
        <shortName evidence="1">RF-3</shortName>
    </recommendedName>
</protein>
<sequence length="520" mass="59469">MSIKEEVESRKTFAIISHPDAGKTTLTEKLLLFGGAIREAGTVKGKKSGKFATSDWMKVEQERGISVTSSVMQFDYDHYKINILDTPGHEDFSEDTYRTLMAVDSAVMVIDCAKGIEPQTLKLFKVCKMRGIPIFTFINKLDRVGKEPFELLDEIESTLEIETYPMNWPVGMGQNFFGIIDRESHTIEPFRDEENVLHLNDDYELEEDHAMKNDSAFTQAIEELMLVEEAGETFDNEALLSGDLTPVFFGSALANFGVQNFLNAYVDHAPMPNARQTNEDIEVSPFDLDFSGFIFKIQANMDPKHRDRIAFMRVVSGAFERGMDVTLQRTHKKQKITRSTSFMADDKETVNHAVAGDIIGLYDTGNYQIGDTLVGGNQKFSFQELPQFTPELFMKVSAKNVMKQKHFHKGIEQLVQEGAIQYYKALHTNQIIIGAVGQLQFEVFEHRLKNEYNVDVVMEPVGQKIARWIENEEDIKDKMSTSRSILVKDIYDNYVFLFENEFATRWFEEKFPEIKLYGLL</sequence>
<proteinExistence type="inferred from homology"/>
<dbReference type="EMBL" id="AP008934">
    <property type="protein sequence ID" value="BAE18910.1"/>
    <property type="molecule type" value="Genomic_DNA"/>
</dbReference>
<dbReference type="RefSeq" id="WP_002483741.1">
    <property type="nucleotide sequence ID" value="NZ_MTGA01000039.1"/>
</dbReference>
<dbReference type="SMR" id="Q49WE9"/>
<dbReference type="GeneID" id="23779707"/>
<dbReference type="KEGG" id="ssp:SSP1765"/>
<dbReference type="PATRIC" id="fig|342451.11.peg.1761"/>
<dbReference type="eggNOG" id="COG4108">
    <property type="taxonomic scope" value="Bacteria"/>
</dbReference>
<dbReference type="HOGENOM" id="CLU_002794_2_1_9"/>
<dbReference type="OrthoDB" id="9804431at2"/>
<dbReference type="Proteomes" id="UP000006371">
    <property type="component" value="Chromosome"/>
</dbReference>
<dbReference type="GO" id="GO:0005829">
    <property type="term" value="C:cytosol"/>
    <property type="evidence" value="ECO:0007669"/>
    <property type="project" value="TreeGrafter"/>
</dbReference>
<dbReference type="GO" id="GO:0005525">
    <property type="term" value="F:GTP binding"/>
    <property type="evidence" value="ECO:0007669"/>
    <property type="project" value="UniProtKB-UniRule"/>
</dbReference>
<dbReference type="GO" id="GO:0003924">
    <property type="term" value="F:GTPase activity"/>
    <property type="evidence" value="ECO:0007669"/>
    <property type="project" value="InterPro"/>
</dbReference>
<dbReference type="GO" id="GO:0016150">
    <property type="term" value="F:translation release factor activity, codon nonspecific"/>
    <property type="evidence" value="ECO:0007669"/>
    <property type="project" value="TreeGrafter"/>
</dbReference>
<dbReference type="GO" id="GO:0016149">
    <property type="term" value="F:translation release factor activity, codon specific"/>
    <property type="evidence" value="ECO:0007669"/>
    <property type="project" value="UniProtKB-UniRule"/>
</dbReference>
<dbReference type="GO" id="GO:0006449">
    <property type="term" value="P:regulation of translational termination"/>
    <property type="evidence" value="ECO:0007669"/>
    <property type="project" value="UniProtKB-UniRule"/>
</dbReference>
<dbReference type="CDD" id="cd04169">
    <property type="entry name" value="RF3"/>
    <property type="match status" value="1"/>
</dbReference>
<dbReference type="FunFam" id="2.40.30.10:FF:000040">
    <property type="entry name" value="Peptide chain release factor 3"/>
    <property type="match status" value="1"/>
</dbReference>
<dbReference type="FunFam" id="3.30.70.3280:FF:000001">
    <property type="entry name" value="Peptide chain release factor 3"/>
    <property type="match status" value="1"/>
</dbReference>
<dbReference type="FunFam" id="3.40.50.300:FF:000542">
    <property type="entry name" value="Peptide chain release factor 3"/>
    <property type="match status" value="1"/>
</dbReference>
<dbReference type="Gene3D" id="3.40.50.300">
    <property type="entry name" value="P-loop containing nucleotide triphosphate hydrolases"/>
    <property type="match status" value="1"/>
</dbReference>
<dbReference type="Gene3D" id="3.30.70.3280">
    <property type="entry name" value="Peptide chain release factor 3, domain III"/>
    <property type="match status" value="1"/>
</dbReference>
<dbReference type="Gene3D" id="2.40.30.10">
    <property type="entry name" value="Translation factors"/>
    <property type="match status" value="1"/>
</dbReference>
<dbReference type="HAMAP" id="MF_00072">
    <property type="entry name" value="Rel_fac_3"/>
    <property type="match status" value="1"/>
</dbReference>
<dbReference type="InterPro" id="IPR053905">
    <property type="entry name" value="EF-G-like_DII"/>
</dbReference>
<dbReference type="InterPro" id="IPR035647">
    <property type="entry name" value="EFG_III/V"/>
</dbReference>
<dbReference type="InterPro" id="IPR031157">
    <property type="entry name" value="G_TR_CS"/>
</dbReference>
<dbReference type="InterPro" id="IPR027417">
    <property type="entry name" value="P-loop_NTPase"/>
</dbReference>
<dbReference type="InterPro" id="IPR004548">
    <property type="entry name" value="PrfC"/>
</dbReference>
<dbReference type="InterPro" id="IPR032090">
    <property type="entry name" value="RF3_C"/>
</dbReference>
<dbReference type="InterPro" id="IPR038467">
    <property type="entry name" value="RF3_dom_3_sf"/>
</dbReference>
<dbReference type="InterPro" id="IPR041732">
    <property type="entry name" value="RF3_GTP-bd"/>
</dbReference>
<dbReference type="InterPro" id="IPR005225">
    <property type="entry name" value="Small_GTP-bd"/>
</dbReference>
<dbReference type="InterPro" id="IPR000795">
    <property type="entry name" value="T_Tr_GTP-bd_dom"/>
</dbReference>
<dbReference type="InterPro" id="IPR009000">
    <property type="entry name" value="Transl_B-barrel_sf"/>
</dbReference>
<dbReference type="NCBIfam" id="TIGR00503">
    <property type="entry name" value="prfC"/>
    <property type="match status" value="1"/>
</dbReference>
<dbReference type="NCBIfam" id="NF001964">
    <property type="entry name" value="PRK00741.1"/>
    <property type="match status" value="1"/>
</dbReference>
<dbReference type="NCBIfam" id="TIGR00231">
    <property type="entry name" value="small_GTP"/>
    <property type="match status" value="1"/>
</dbReference>
<dbReference type="PANTHER" id="PTHR43556">
    <property type="entry name" value="PEPTIDE CHAIN RELEASE FACTOR RF3"/>
    <property type="match status" value="1"/>
</dbReference>
<dbReference type="PANTHER" id="PTHR43556:SF2">
    <property type="entry name" value="PEPTIDE CHAIN RELEASE FACTOR RF3"/>
    <property type="match status" value="1"/>
</dbReference>
<dbReference type="Pfam" id="PF22042">
    <property type="entry name" value="EF-G_D2"/>
    <property type="match status" value="1"/>
</dbReference>
<dbReference type="Pfam" id="PF00009">
    <property type="entry name" value="GTP_EFTU"/>
    <property type="match status" value="1"/>
</dbReference>
<dbReference type="Pfam" id="PF16658">
    <property type="entry name" value="RF3_C"/>
    <property type="match status" value="1"/>
</dbReference>
<dbReference type="PRINTS" id="PR00315">
    <property type="entry name" value="ELONGATNFCT"/>
</dbReference>
<dbReference type="SUPFAM" id="SSF54980">
    <property type="entry name" value="EF-G C-terminal domain-like"/>
    <property type="match status" value="1"/>
</dbReference>
<dbReference type="SUPFAM" id="SSF52540">
    <property type="entry name" value="P-loop containing nucleoside triphosphate hydrolases"/>
    <property type="match status" value="1"/>
</dbReference>
<dbReference type="SUPFAM" id="SSF50447">
    <property type="entry name" value="Translation proteins"/>
    <property type="match status" value="1"/>
</dbReference>
<dbReference type="PROSITE" id="PS00301">
    <property type="entry name" value="G_TR_1"/>
    <property type="match status" value="1"/>
</dbReference>
<dbReference type="PROSITE" id="PS51722">
    <property type="entry name" value="G_TR_2"/>
    <property type="match status" value="1"/>
</dbReference>
<evidence type="ECO:0000255" key="1">
    <source>
        <dbReference type="HAMAP-Rule" id="MF_00072"/>
    </source>
</evidence>
<comment type="function">
    <text evidence="1">Increases the formation of ribosomal termination complexes and stimulates activities of RF-1 and RF-2. It binds guanine nucleotides and has strong preference for UGA stop codons. It may interact directly with the ribosome. The stimulation of RF-1 and RF-2 is significantly reduced by GTP and GDP, but not by GMP.</text>
</comment>
<comment type="subcellular location">
    <subcellularLocation>
        <location evidence="1">Cytoplasm</location>
    </subcellularLocation>
</comment>
<comment type="similarity">
    <text evidence="1">Belongs to the TRAFAC class translation factor GTPase superfamily. Classic translation factor GTPase family. PrfC subfamily.</text>
</comment>
<accession>Q49WE9</accession>
<organism>
    <name type="scientific">Staphylococcus saprophyticus subsp. saprophyticus (strain ATCC 15305 / DSM 20229 / NCIMB 8711 / NCTC 7292 / S-41)</name>
    <dbReference type="NCBI Taxonomy" id="342451"/>
    <lineage>
        <taxon>Bacteria</taxon>
        <taxon>Bacillati</taxon>
        <taxon>Bacillota</taxon>
        <taxon>Bacilli</taxon>
        <taxon>Bacillales</taxon>
        <taxon>Staphylococcaceae</taxon>
        <taxon>Staphylococcus</taxon>
    </lineage>
</organism>